<proteinExistence type="evidence at protein level"/>
<reference key="1">
    <citation type="journal article" date="2009" name="J. Bacteriol.">
        <title>The genome of Burkholderia cenocepacia J2315, an epidemic pathogen of cystic fibrosis patients.</title>
        <authorList>
            <person name="Holden M.T."/>
            <person name="Seth-Smith H.M."/>
            <person name="Crossman L.C."/>
            <person name="Sebaihia M."/>
            <person name="Bentley S.D."/>
            <person name="Cerdeno-Tarraga A.M."/>
            <person name="Thomson N.R."/>
            <person name="Bason N."/>
            <person name="Quail M.A."/>
            <person name="Sharp S."/>
            <person name="Cherevach I."/>
            <person name="Churcher C."/>
            <person name="Goodhead I."/>
            <person name="Hauser H."/>
            <person name="Holroyd N."/>
            <person name="Mungall K."/>
            <person name="Scott P."/>
            <person name="Walker D."/>
            <person name="White B."/>
            <person name="Rose H."/>
            <person name="Iversen P."/>
            <person name="Mil-Homens D."/>
            <person name="Rocha E.P."/>
            <person name="Fialho A.M."/>
            <person name="Baldwin A."/>
            <person name="Dowson C."/>
            <person name="Barrell B.G."/>
            <person name="Govan J.R."/>
            <person name="Vandamme P."/>
            <person name="Hart C.A."/>
            <person name="Mahenthiralingam E."/>
            <person name="Parkhill J."/>
        </authorList>
    </citation>
    <scope>NUCLEOTIDE SEQUENCE [LARGE SCALE GENOMIC DNA]</scope>
    <source>
        <strain>ATCC BAA-245 / DSM 16553 / LMG 16656 / NCTC 13227 / J2315 / CF5610</strain>
    </source>
</reference>
<reference key="2">
    <citation type="journal article" date="2014" name="Glycobiology">
        <title>A Burkholderia cenocepacia MurJ (MviN) homolog is essential for cell wall peptidoglycan synthesis and bacterial viability.</title>
        <authorList>
            <person name="Mohamed Y.F."/>
            <person name="Valvano M.A."/>
        </authorList>
    </citation>
    <scope>FUNCTION</scope>
    <scope>PATHWAY</scope>
    <scope>DISRUPTION PHENOTYPE</scope>
    <scope>MUTAGENESIS OF ARG-18; ARG-24; ASP-39; ARG-52 AND ARG-274</scope>
</reference>
<accession>B4E9G3</accession>
<evidence type="ECO:0000255" key="1">
    <source>
        <dbReference type="HAMAP-Rule" id="MF_02078"/>
    </source>
</evidence>
<evidence type="ECO:0000269" key="2">
    <source>
    </source>
</evidence>
<evidence type="ECO:0000303" key="3">
    <source>
    </source>
</evidence>
<evidence type="ECO:0000305" key="4"/>
<evidence type="ECO:0000305" key="5">
    <source>
    </source>
</evidence>
<evidence type="ECO:0000312" key="6">
    <source>
        <dbReference type="EMBL" id="CAR53064.1"/>
    </source>
</evidence>
<name>MURJ_BURCJ</name>
<feature type="chain" id="PRO_0000438821" description="Lipid II flippase MurJ">
    <location>
        <begin position="1"/>
        <end position="516"/>
    </location>
</feature>
<feature type="transmembrane region" description="Helical" evidence="1">
    <location>
        <begin position="93"/>
        <end position="113"/>
    </location>
</feature>
<feature type="transmembrane region" description="Helical" evidence="1">
    <location>
        <begin position="133"/>
        <end position="153"/>
    </location>
</feature>
<feature type="transmembrane region" description="Helical" evidence="1">
    <location>
        <begin position="159"/>
        <end position="179"/>
    </location>
</feature>
<feature type="transmembrane region" description="Helical" evidence="1">
    <location>
        <begin position="188"/>
        <end position="208"/>
    </location>
</feature>
<feature type="transmembrane region" description="Helical" evidence="1">
    <location>
        <begin position="233"/>
        <end position="253"/>
    </location>
</feature>
<feature type="transmembrane region" description="Helical" evidence="1">
    <location>
        <begin position="275"/>
        <end position="295"/>
    </location>
</feature>
<feature type="transmembrane region" description="Helical" evidence="1">
    <location>
        <begin position="317"/>
        <end position="337"/>
    </location>
</feature>
<feature type="transmembrane region" description="Helical" evidence="1">
    <location>
        <begin position="358"/>
        <end position="378"/>
    </location>
</feature>
<feature type="transmembrane region" description="Helical" evidence="1">
    <location>
        <begin position="390"/>
        <end position="409"/>
    </location>
</feature>
<feature type="transmembrane region" description="Helical" evidence="1">
    <location>
        <begin position="448"/>
        <end position="468"/>
    </location>
</feature>
<feature type="transmembrane region" description="Helical" evidence="1">
    <location>
        <begin position="483"/>
        <end position="503"/>
    </location>
</feature>
<feature type="mutagenesis site" description="Lack of activity." evidence="2">
    <original>R</original>
    <variation>A</variation>
    <location>
        <position position="18"/>
    </location>
</feature>
<feature type="mutagenesis site" description="Lack of activity." evidence="2">
    <original>R</original>
    <variation>A</variation>
    <location>
        <position position="24"/>
    </location>
</feature>
<feature type="mutagenesis site" description="No change in activity." evidence="2">
    <original>D</original>
    <variation>A</variation>
    <location>
        <position position="39"/>
    </location>
</feature>
<feature type="mutagenesis site" description="No change in activity." evidence="2">
    <original>R</original>
    <variation>A</variation>
    <location>
        <position position="52"/>
    </location>
</feature>
<feature type="mutagenesis site" description="Lack of activity." evidence="2">
    <original>R</original>
    <variation>A</variation>
    <location>
        <position position="274"/>
    </location>
</feature>
<dbReference type="EMBL" id="AM747720">
    <property type="protein sequence ID" value="CAR53064.1"/>
    <property type="molecule type" value="Genomic_DNA"/>
</dbReference>
<dbReference type="RefSeq" id="WP_006482209.1">
    <property type="nucleotide sequence ID" value="NC_011000.1"/>
</dbReference>
<dbReference type="SMR" id="B4E9G3"/>
<dbReference type="GeneID" id="56559136"/>
<dbReference type="KEGG" id="bcj:BCAL2764"/>
<dbReference type="eggNOG" id="COG0728">
    <property type="taxonomic scope" value="Bacteria"/>
</dbReference>
<dbReference type="HOGENOM" id="CLU_006797_5_3_4"/>
<dbReference type="BioCyc" id="BCEN216591:G1G1V-3062-MONOMER"/>
<dbReference type="UniPathway" id="UPA00219"/>
<dbReference type="Proteomes" id="UP000001035">
    <property type="component" value="Chromosome 1"/>
</dbReference>
<dbReference type="GO" id="GO:0005886">
    <property type="term" value="C:plasma membrane"/>
    <property type="evidence" value="ECO:0007669"/>
    <property type="project" value="UniProtKB-SubCell"/>
</dbReference>
<dbReference type="GO" id="GO:0015648">
    <property type="term" value="F:lipid-linked peptidoglycan transporter activity"/>
    <property type="evidence" value="ECO:0007669"/>
    <property type="project" value="UniProtKB-UniRule"/>
</dbReference>
<dbReference type="GO" id="GO:0071555">
    <property type="term" value="P:cell wall organization"/>
    <property type="evidence" value="ECO:0007669"/>
    <property type="project" value="UniProtKB-KW"/>
</dbReference>
<dbReference type="GO" id="GO:0034204">
    <property type="term" value="P:lipid translocation"/>
    <property type="evidence" value="ECO:0007669"/>
    <property type="project" value="TreeGrafter"/>
</dbReference>
<dbReference type="GO" id="GO:0009252">
    <property type="term" value="P:peptidoglycan biosynthetic process"/>
    <property type="evidence" value="ECO:0007669"/>
    <property type="project" value="UniProtKB-UniRule"/>
</dbReference>
<dbReference type="GO" id="GO:0008360">
    <property type="term" value="P:regulation of cell shape"/>
    <property type="evidence" value="ECO:0007669"/>
    <property type="project" value="UniProtKB-KW"/>
</dbReference>
<dbReference type="CDD" id="cd13123">
    <property type="entry name" value="MATE_MurJ_like"/>
    <property type="match status" value="1"/>
</dbReference>
<dbReference type="HAMAP" id="MF_02078">
    <property type="entry name" value="MurJ_MviN"/>
    <property type="match status" value="1"/>
</dbReference>
<dbReference type="InterPro" id="IPR051050">
    <property type="entry name" value="Lipid_II_flippase_MurJ/MviN"/>
</dbReference>
<dbReference type="InterPro" id="IPR004268">
    <property type="entry name" value="MurJ"/>
</dbReference>
<dbReference type="NCBIfam" id="TIGR01695">
    <property type="entry name" value="murJ_mviN"/>
    <property type="match status" value="1"/>
</dbReference>
<dbReference type="PANTHER" id="PTHR47019">
    <property type="entry name" value="LIPID II FLIPPASE MURJ"/>
    <property type="match status" value="1"/>
</dbReference>
<dbReference type="PANTHER" id="PTHR47019:SF1">
    <property type="entry name" value="LIPID II FLIPPASE MURJ"/>
    <property type="match status" value="1"/>
</dbReference>
<dbReference type="Pfam" id="PF03023">
    <property type="entry name" value="MurJ"/>
    <property type="match status" value="1"/>
</dbReference>
<dbReference type="PIRSF" id="PIRSF002869">
    <property type="entry name" value="MviN"/>
    <property type="match status" value="1"/>
</dbReference>
<dbReference type="PRINTS" id="PR01806">
    <property type="entry name" value="VIRFACTRMVIN"/>
</dbReference>
<organism>
    <name type="scientific">Burkholderia cenocepacia (strain ATCC BAA-245 / DSM 16553 / LMG 16656 / NCTC 13227 / J2315 / CF5610)</name>
    <name type="common">Burkholderia cepacia (strain J2315)</name>
    <dbReference type="NCBI Taxonomy" id="216591"/>
    <lineage>
        <taxon>Bacteria</taxon>
        <taxon>Pseudomonadati</taxon>
        <taxon>Pseudomonadota</taxon>
        <taxon>Betaproteobacteria</taxon>
        <taxon>Burkholderiales</taxon>
        <taxon>Burkholderiaceae</taxon>
        <taxon>Burkholderia</taxon>
        <taxon>Burkholderia cepacia complex</taxon>
    </lineage>
</organism>
<gene>
    <name evidence="1 3" type="primary">murJ</name>
    <name evidence="3" type="synonym">mviN</name>
    <name evidence="4" type="ordered locus">BceJ2315_27020</name>
    <name evidence="6" type="ORF">BCAL2764</name>
</gene>
<sequence>MNLFRALLTVSGFTLLSRVTGLARETLIARAFGASQYTDAFYVAFRIPNLLRRLSAEGAFSQAFVPILAEFKNQQGHDATKALVDAMSTVLAWALAVLSVVGIAGASWVVFAVASGLHSDGQAFPLAVTMTRIMFPYIVFISLTTLASGVLNTYKSFSLPAFAPVLLNVAFIAAAVFVAPHLKVPVYALAWAVIVGGVLQFLVQLPGLKKVDMVPLIGLNPLRALRHPGVKRVLAKMVPATFAVSVAQLSLIINTNIASRLGQGAVSWINYADRLMEFPTALLGVALGTILLPSLSKAHVDADSHEYSALLDWGLRVTFLLAAPSALALFFFATPLTATLFNYGKFDAHTVTMVARALATYGIGLVGIILIKILAPGFYAKQDIKTPVKIAIGVLIVTQLSNYVFVPLIGHAGLTLSIGVGACLNSLLLFLGLRKRGIYQPSPGWLRFFVQLVGAALVLAGLMHWCAINFDWTGMRAQPLDRIALMAACLVLFAALYFGMLWVMGFKYAYFRRRAK</sequence>
<keyword id="KW-0997">Cell inner membrane</keyword>
<keyword id="KW-1003">Cell membrane</keyword>
<keyword id="KW-0133">Cell shape</keyword>
<keyword id="KW-0961">Cell wall biogenesis/degradation</keyword>
<keyword id="KW-0472">Membrane</keyword>
<keyword id="KW-0573">Peptidoglycan synthesis</keyword>
<keyword id="KW-0812">Transmembrane</keyword>
<keyword id="KW-1133">Transmembrane helix</keyword>
<keyword id="KW-0813">Transport</keyword>
<comment type="function">
    <text evidence="1 5">Involved in peptidoglycan biosynthesis. Transports lipid-linked peptidoglycan precursors from the inner to the outer leaflet of the cytoplasmic membrane.</text>
</comment>
<comment type="pathway">
    <text evidence="1 2">Cell wall biogenesis; peptidoglycan biosynthesis.</text>
</comment>
<comment type="subcellular location">
    <subcellularLocation>
        <location evidence="1">Cell inner membrane</location>
        <topology evidence="1">Multi-pass membrane protein</topology>
    </subcellularLocation>
</comment>
<comment type="disruption phenotype">
    <text evidence="2">Essential for growth, it cannot be deleted. Under non-permissive conditions, conditional mutant shows growth arrest, dramatic morphological changes and cell lysis. Depletion causes accumulation of peptidoglycan precursors in the cytoplasm.</text>
</comment>
<comment type="similarity">
    <text evidence="1 4">Belongs to the MurJ/MviN family.</text>
</comment>
<protein>
    <recommendedName>
        <fullName evidence="4">Lipid II flippase MurJ</fullName>
    </recommendedName>
</protein>